<evidence type="ECO:0000255" key="1">
    <source>
        <dbReference type="HAMAP-Rule" id="MF_00453"/>
    </source>
</evidence>
<name>PCKA_IDILO</name>
<accession>Q5QUN4</accession>
<gene>
    <name evidence="1" type="primary">pckA</name>
    <name type="ordered locus">IL0273</name>
</gene>
<reference key="1">
    <citation type="journal article" date="2004" name="Proc. Natl. Acad. Sci. U.S.A.">
        <title>Genome sequence of the deep-sea gamma-proteobacterium Idiomarina loihiensis reveals amino acid fermentation as a source of carbon and energy.</title>
        <authorList>
            <person name="Hou S."/>
            <person name="Saw J.H."/>
            <person name="Lee K.S."/>
            <person name="Freitas T.A."/>
            <person name="Belisle C."/>
            <person name="Kawarabayasi Y."/>
            <person name="Donachie S.P."/>
            <person name="Pikina A."/>
            <person name="Galperin M.Y."/>
            <person name="Koonin E.V."/>
            <person name="Makarova K.S."/>
            <person name="Omelchenko M.V."/>
            <person name="Sorokin A."/>
            <person name="Wolf Y.I."/>
            <person name="Li Q.X."/>
            <person name="Keum Y.S."/>
            <person name="Campbell S."/>
            <person name="Denery J."/>
            <person name="Aizawa S."/>
            <person name="Shibata S."/>
            <person name="Malahoff A."/>
            <person name="Alam M."/>
        </authorList>
    </citation>
    <scope>NUCLEOTIDE SEQUENCE [LARGE SCALE GENOMIC DNA]</scope>
    <source>
        <strain>ATCC BAA-735 / DSM 15497 / L2-TR</strain>
    </source>
</reference>
<organism>
    <name type="scientific">Idiomarina loihiensis (strain ATCC BAA-735 / DSM 15497 / L2-TR)</name>
    <dbReference type="NCBI Taxonomy" id="283942"/>
    <lineage>
        <taxon>Bacteria</taxon>
        <taxon>Pseudomonadati</taxon>
        <taxon>Pseudomonadota</taxon>
        <taxon>Gammaproteobacteria</taxon>
        <taxon>Alteromonadales</taxon>
        <taxon>Idiomarinaceae</taxon>
        <taxon>Idiomarina</taxon>
    </lineage>
</organism>
<sequence length="533" mass="59212">MPNLDLSRYGITDVEEIVHNPSYDLLFEEETRDDLQGYEKGTVTDLGAVAVDTGIFTGRSPKDKYIVRDDTTRDTVWWADQGKNDNKPLSTETWNELKGLVTEQLSHKRLFVVDTYCGANEDTRLAVRFITEVAWQAHFVKNMFIRPSEEELENFEPDFVVMNGAKCINPKWQEQELNSENFVAFNLTEKIQLIGGTWYGGEMKKGMFSMMNYFLPLKGIASMHCSANVGQEGDVAVFFGLSGTGKTTLSTDPKRALIGDDEHGWDDDGVFNFEGGCYAKTINLSKEAEPDIYNAIRRDALLENVAVDDNGVVDFDDNSKTENTRVSYPIYHIDNIVKPVSKAGHAKKVIFLTADAFGVLPPVSKLTKEQAQYHFLSGFTAKLAGTERGVTEPTPTFSSCFGAAFLSLHPTQYAEVLVKRMEAAGAEAYLVNTGWNGTGKRISIKATRAIIDAILDGSIEDAEFVQLPHFNLAMPTELAGVEDSSILDPRKTYEDDGEWDVRAKDLAERFVANFEKFTDTDNGKALVAAGPQL</sequence>
<keyword id="KW-0067">ATP-binding</keyword>
<keyword id="KW-0963">Cytoplasm</keyword>
<keyword id="KW-0210">Decarboxylase</keyword>
<keyword id="KW-0312">Gluconeogenesis</keyword>
<keyword id="KW-0456">Lyase</keyword>
<keyword id="KW-0464">Manganese</keyword>
<keyword id="KW-0479">Metal-binding</keyword>
<keyword id="KW-0547">Nucleotide-binding</keyword>
<keyword id="KW-1185">Reference proteome</keyword>
<feature type="chain" id="PRO_0000236927" description="Phosphoenolpyruvate carboxykinase (ATP)">
    <location>
        <begin position="1"/>
        <end position="533"/>
    </location>
</feature>
<feature type="binding site" evidence="1">
    <location>
        <position position="59"/>
    </location>
    <ligand>
        <name>substrate</name>
    </ligand>
</feature>
<feature type="binding site" evidence="1">
    <location>
        <position position="199"/>
    </location>
    <ligand>
        <name>substrate</name>
    </ligand>
</feature>
<feature type="binding site" evidence="1">
    <location>
        <position position="205"/>
    </location>
    <ligand>
        <name>ATP</name>
        <dbReference type="ChEBI" id="CHEBI:30616"/>
    </ligand>
</feature>
<feature type="binding site" evidence="1">
    <location>
        <position position="205"/>
    </location>
    <ligand>
        <name>Mn(2+)</name>
        <dbReference type="ChEBI" id="CHEBI:29035"/>
    </ligand>
</feature>
<feature type="binding site" evidence="1">
    <location>
        <position position="205"/>
    </location>
    <ligand>
        <name>substrate</name>
    </ligand>
</feature>
<feature type="binding site" evidence="1">
    <location>
        <position position="224"/>
    </location>
    <ligand>
        <name>ATP</name>
        <dbReference type="ChEBI" id="CHEBI:30616"/>
    </ligand>
</feature>
<feature type="binding site" evidence="1">
    <location>
        <position position="224"/>
    </location>
    <ligand>
        <name>Mn(2+)</name>
        <dbReference type="ChEBI" id="CHEBI:29035"/>
    </ligand>
</feature>
<feature type="binding site" evidence="1">
    <location>
        <begin position="240"/>
        <end position="248"/>
    </location>
    <ligand>
        <name>ATP</name>
        <dbReference type="ChEBI" id="CHEBI:30616"/>
    </ligand>
</feature>
<feature type="binding site" evidence="1">
    <location>
        <position position="261"/>
    </location>
    <ligand>
        <name>Mn(2+)</name>
        <dbReference type="ChEBI" id="CHEBI:29035"/>
    </ligand>
</feature>
<feature type="binding site" evidence="1">
    <location>
        <position position="289"/>
    </location>
    <ligand>
        <name>ATP</name>
        <dbReference type="ChEBI" id="CHEBI:30616"/>
    </ligand>
</feature>
<feature type="binding site" evidence="1">
    <location>
        <position position="325"/>
    </location>
    <ligand>
        <name>ATP</name>
        <dbReference type="ChEBI" id="CHEBI:30616"/>
    </ligand>
</feature>
<feature type="binding site" evidence="1">
    <location>
        <position position="325"/>
    </location>
    <ligand>
        <name>substrate</name>
    </ligand>
</feature>
<feature type="binding site" evidence="1">
    <location>
        <begin position="441"/>
        <end position="442"/>
    </location>
    <ligand>
        <name>ATP</name>
        <dbReference type="ChEBI" id="CHEBI:30616"/>
    </ligand>
</feature>
<feature type="binding site" evidence="1">
    <location>
        <position position="447"/>
    </location>
    <ligand>
        <name>ATP</name>
        <dbReference type="ChEBI" id="CHEBI:30616"/>
    </ligand>
</feature>
<comment type="function">
    <text evidence="1">Involved in the gluconeogenesis. Catalyzes the conversion of oxaloacetate (OAA) to phosphoenolpyruvate (PEP) through direct phosphoryl transfer between the nucleoside triphosphate and OAA.</text>
</comment>
<comment type="catalytic activity">
    <reaction evidence="1">
        <text>oxaloacetate + ATP = phosphoenolpyruvate + ADP + CO2</text>
        <dbReference type="Rhea" id="RHEA:18617"/>
        <dbReference type="ChEBI" id="CHEBI:16452"/>
        <dbReference type="ChEBI" id="CHEBI:16526"/>
        <dbReference type="ChEBI" id="CHEBI:30616"/>
        <dbReference type="ChEBI" id="CHEBI:58702"/>
        <dbReference type="ChEBI" id="CHEBI:456216"/>
        <dbReference type="EC" id="4.1.1.49"/>
    </reaction>
</comment>
<comment type="cofactor">
    <cofactor evidence="1">
        <name>Mn(2+)</name>
        <dbReference type="ChEBI" id="CHEBI:29035"/>
    </cofactor>
    <text evidence="1">Binds 1 Mn(2+) ion per subunit.</text>
</comment>
<comment type="pathway">
    <text evidence="1">Carbohydrate biosynthesis; gluconeogenesis.</text>
</comment>
<comment type="subunit">
    <text evidence="1">Monomer.</text>
</comment>
<comment type="subcellular location">
    <subcellularLocation>
        <location evidence="1">Cytoplasm</location>
    </subcellularLocation>
</comment>
<comment type="similarity">
    <text evidence="1">Belongs to the phosphoenolpyruvate carboxykinase (ATP) family.</text>
</comment>
<protein>
    <recommendedName>
        <fullName evidence="1">Phosphoenolpyruvate carboxykinase (ATP)</fullName>
        <shortName evidence="1">PCK</shortName>
        <shortName evidence="1">PEP carboxykinase</shortName>
        <shortName evidence="1">PEPCK</shortName>
        <ecNumber evidence="1">4.1.1.49</ecNumber>
    </recommendedName>
</protein>
<dbReference type="EC" id="4.1.1.49" evidence="1"/>
<dbReference type="EMBL" id="AE017340">
    <property type="protein sequence ID" value="AAV81116.1"/>
    <property type="molecule type" value="Genomic_DNA"/>
</dbReference>
<dbReference type="RefSeq" id="WP_011233535.1">
    <property type="nucleotide sequence ID" value="NC_006512.1"/>
</dbReference>
<dbReference type="SMR" id="Q5QUN4"/>
<dbReference type="STRING" id="283942.IL0273"/>
<dbReference type="GeneID" id="41335420"/>
<dbReference type="KEGG" id="ilo:IL0273"/>
<dbReference type="eggNOG" id="COG1866">
    <property type="taxonomic scope" value="Bacteria"/>
</dbReference>
<dbReference type="HOGENOM" id="CLU_018247_0_1_6"/>
<dbReference type="OrthoDB" id="9806325at2"/>
<dbReference type="UniPathway" id="UPA00138"/>
<dbReference type="Proteomes" id="UP000001171">
    <property type="component" value="Chromosome"/>
</dbReference>
<dbReference type="GO" id="GO:0005829">
    <property type="term" value="C:cytosol"/>
    <property type="evidence" value="ECO:0007669"/>
    <property type="project" value="TreeGrafter"/>
</dbReference>
<dbReference type="GO" id="GO:0005524">
    <property type="term" value="F:ATP binding"/>
    <property type="evidence" value="ECO:0007669"/>
    <property type="project" value="UniProtKB-UniRule"/>
</dbReference>
<dbReference type="GO" id="GO:0046872">
    <property type="term" value="F:metal ion binding"/>
    <property type="evidence" value="ECO:0007669"/>
    <property type="project" value="UniProtKB-KW"/>
</dbReference>
<dbReference type="GO" id="GO:0004612">
    <property type="term" value="F:phosphoenolpyruvate carboxykinase (ATP) activity"/>
    <property type="evidence" value="ECO:0007669"/>
    <property type="project" value="UniProtKB-UniRule"/>
</dbReference>
<dbReference type="GO" id="GO:0006094">
    <property type="term" value="P:gluconeogenesis"/>
    <property type="evidence" value="ECO:0007669"/>
    <property type="project" value="UniProtKB-UniRule"/>
</dbReference>
<dbReference type="CDD" id="cd00484">
    <property type="entry name" value="PEPCK_ATP"/>
    <property type="match status" value="1"/>
</dbReference>
<dbReference type="FunFam" id="2.170.8.10:FF:000001">
    <property type="entry name" value="Phosphoenolpyruvate carboxykinase (ATP)"/>
    <property type="match status" value="1"/>
</dbReference>
<dbReference type="FunFam" id="3.40.449.10:FF:000001">
    <property type="entry name" value="Phosphoenolpyruvate carboxykinase (ATP)"/>
    <property type="match status" value="1"/>
</dbReference>
<dbReference type="Gene3D" id="3.90.228.20">
    <property type="match status" value="1"/>
</dbReference>
<dbReference type="Gene3D" id="3.40.449.10">
    <property type="entry name" value="Phosphoenolpyruvate Carboxykinase, domain 1"/>
    <property type="match status" value="1"/>
</dbReference>
<dbReference type="Gene3D" id="2.170.8.10">
    <property type="entry name" value="Phosphoenolpyruvate Carboxykinase, domain 2"/>
    <property type="match status" value="1"/>
</dbReference>
<dbReference type="HAMAP" id="MF_00453">
    <property type="entry name" value="PEPCK_ATP"/>
    <property type="match status" value="1"/>
</dbReference>
<dbReference type="InterPro" id="IPR001272">
    <property type="entry name" value="PEP_carboxykinase_ATP"/>
</dbReference>
<dbReference type="InterPro" id="IPR013035">
    <property type="entry name" value="PEP_carboxykinase_C"/>
</dbReference>
<dbReference type="InterPro" id="IPR008210">
    <property type="entry name" value="PEP_carboxykinase_N"/>
</dbReference>
<dbReference type="InterPro" id="IPR015994">
    <property type="entry name" value="PEPCK_ATP_CS"/>
</dbReference>
<dbReference type="NCBIfam" id="TIGR00224">
    <property type="entry name" value="pckA"/>
    <property type="match status" value="1"/>
</dbReference>
<dbReference type="NCBIfam" id="NF006819">
    <property type="entry name" value="PRK09344.1-1"/>
    <property type="match status" value="1"/>
</dbReference>
<dbReference type="NCBIfam" id="NF006820">
    <property type="entry name" value="PRK09344.1-2"/>
    <property type="match status" value="1"/>
</dbReference>
<dbReference type="NCBIfam" id="NF006821">
    <property type="entry name" value="PRK09344.1-3"/>
    <property type="match status" value="1"/>
</dbReference>
<dbReference type="PANTHER" id="PTHR30031:SF0">
    <property type="entry name" value="PHOSPHOENOLPYRUVATE CARBOXYKINASE (ATP)"/>
    <property type="match status" value="1"/>
</dbReference>
<dbReference type="PANTHER" id="PTHR30031">
    <property type="entry name" value="PHOSPHOENOLPYRUVATE CARBOXYKINASE ATP"/>
    <property type="match status" value="1"/>
</dbReference>
<dbReference type="Pfam" id="PF01293">
    <property type="entry name" value="PEPCK_ATP"/>
    <property type="match status" value="1"/>
</dbReference>
<dbReference type="PIRSF" id="PIRSF006294">
    <property type="entry name" value="PEP_crbxkin"/>
    <property type="match status" value="1"/>
</dbReference>
<dbReference type="SUPFAM" id="SSF68923">
    <property type="entry name" value="PEP carboxykinase N-terminal domain"/>
    <property type="match status" value="1"/>
</dbReference>
<dbReference type="SUPFAM" id="SSF53795">
    <property type="entry name" value="PEP carboxykinase-like"/>
    <property type="match status" value="1"/>
</dbReference>
<dbReference type="PROSITE" id="PS00532">
    <property type="entry name" value="PEPCK_ATP"/>
    <property type="match status" value="1"/>
</dbReference>
<proteinExistence type="inferred from homology"/>